<reference key="1">
    <citation type="journal article" date="1998" name="Nature">
        <title>The genome sequence of Rickettsia prowazekii and the origin of mitochondria.</title>
        <authorList>
            <person name="Andersson S.G.E."/>
            <person name="Zomorodipour A."/>
            <person name="Andersson J.O."/>
            <person name="Sicheritz-Ponten T."/>
            <person name="Alsmark U.C.M."/>
            <person name="Podowski R.M."/>
            <person name="Naeslund A.K."/>
            <person name="Eriksson A.-S."/>
            <person name="Winkler H.H."/>
            <person name="Kurland C.G."/>
        </authorList>
    </citation>
    <scope>NUCLEOTIDE SEQUENCE [LARGE SCALE GENOMIC DNA]</scope>
    <source>
        <strain>Madrid E</strain>
    </source>
</reference>
<accession>Q9ZED3</accession>
<sequence length="346" mass="37243">MVSSNFYKNLGPRKLTAIVDFLHDIIEPTKIYEDIDIYDIKILQEASPNDISFLSNPKYSEFLKTTKAAACIVPKNFTEEVNQNTVLIHAENSYFAYSKLIDFFYAPIKSYSTKIMKSAIIADSATIGKNCYIGHNVVIEDDVIIGDNSIIDAGTFIGRGVNIGKNARIEQHVSINYAIIGDDVVILVGAKIGQDGFGFSTEKGVHHKIFHIGIVKIGNNVEIGSNTTIDRGALQDTIIEDLCRIDNLVQIGHGVKIGKGSIIVAQAGIAGSSAIGKYCALGGQVGIAGHLNIGDGTQVAAQGGVAQNIEEGKIVGGSPAVPIMDWHRQSIIMKQLVKTSNSKLKK</sequence>
<comment type="function">
    <text evidence="1">Catalyzes the N-acylation of UDP-3-O-acylglucosamine using 3-hydroxyacyl-ACP as the acyl donor. Is involved in the biosynthesis of lipid A, a phosphorylated glycolipid that anchors the lipopolysaccharide to the outer membrane of the cell.</text>
</comment>
<comment type="catalytic activity">
    <reaction evidence="1">
        <text>a UDP-3-O-[(3R)-3-hydroxyacyl]-alpha-D-glucosamine + a (3R)-hydroxyacyl-[ACP] = a UDP-2-N,3-O-bis[(3R)-3-hydroxyacyl]-alpha-D-glucosamine + holo-[ACP] + H(+)</text>
        <dbReference type="Rhea" id="RHEA:53836"/>
        <dbReference type="Rhea" id="RHEA-COMP:9685"/>
        <dbReference type="Rhea" id="RHEA-COMP:9945"/>
        <dbReference type="ChEBI" id="CHEBI:15378"/>
        <dbReference type="ChEBI" id="CHEBI:64479"/>
        <dbReference type="ChEBI" id="CHEBI:78827"/>
        <dbReference type="ChEBI" id="CHEBI:137740"/>
        <dbReference type="ChEBI" id="CHEBI:137748"/>
        <dbReference type="EC" id="2.3.1.191"/>
    </reaction>
</comment>
<comment type="pathway">
    <text evidence="1">Bacterial outer membrane biogenesis; LPS lipid A biosynthesis.</text>
</comment>
<comment type="subunit">
    <text evidence="1">Homotrimer.</text>
</comment>
<comment type="similarity">
    <text evidence="1">Belongs to the transferase hexapeptide repeat family. LpxD subfamily.</text>
</comment>
<dbReference type="EC" id="2.3.1.191" evidence="1"/>
<dbReference type="EMBL" id="AJ235270">
    <property type="protein sequence ID" value="CAA14482.1"/>
    <property type="molecule type" value="Genomic_DNA"/>
</dbReference>
<dbReference type="PIR" id="C71708">
    <property type="entry name" value="C71708"/>
</dbReference>
<dbReference type="RefSeq" id="NP_220405.1">
    <property type="nucleotide sequence ID" value="NC_000963.1"/>
</dbReference>
<dbReference type="RefSeq" id="WP_004596698.1">
    <property type="nucleotide sequence ID" value="NC_000963.1"/>
</dbReference>
<dbReference type="SMR" id="Q9ZED3"/>
<dbReference type="STRING" id="272947.gene:17555092"/>
<dbReference type="EnsemblBacteria" id="CAA14482">
    <property type="protein sequence ID" value="CAA14482"/>
    <property type="gene ID" value="CAA14482"/>
</dbReference>
<dbReference type="GeneID" id="57569137"/>
<dbReference type="KEGG" id="rpr:RP009"/>
<dbReference type="PATRIC" id="fig|272947.5.peg.9"/>
<dbReference type="eggNOG" id="COG1044">
    <property type="taxonomic scope" value="Bacteria"/>
</dbReference>
<dbReference type="HOGENOM" id="CLU_049865_0_0_5"/>
<dbReference type="OrthoDB" id="9784739at2"/>
<dbReference type="UniPathway" id="UPA00973"/>
<dbReference type="Proteomes" id="UP000002480">
    <property type="component" value="Chromosome"/>
</dbReference>
<dbReference type="GO" id="GO:0016020">
    <property type="term" value="C:membrane"/>
    <property type="evidence" value="ECO:0007669"/>
    <property type="project" value="GOC"/>
</dbReference>
<dbReference type="GO" id="GO:0016410">
    <property type="term" value="F:N-acyltransferase activity"/>
    <property type="evidence" value="ECO:0007669"/>
    <property type="project" value="InterPro"/>
</dbReference>
<dbReference type="GO" id="GO:0009245">
    <property type="term" value="P:lipid A biosynthetic process"/>
    <property type="evidence" value="ECO:0007669"/>
    <property type="project" value="UniProtKB-UniRule"/>
</dbReference>
<dbReference type="CDD" id="cd03352">
    <property type="entry name" value="LbH_LpxD"/>
    <property type="match status" value="1"/>
</dbReference>
<dbReference type="Gene3D" id="2.160.10.10">
    <property type="entry name" value="Hexapeptide repeat proteins"/>
    <property type="match status" value="1"/>
</dbReference>
<dbReference type="Gene3D" id="3.40.1390.10">
    <property type="entry name" value="MurE/MurF, N-terminal domain"/>
    <property type="match status" value="1"/>
</dbReference>
<dbReference type="HAMAP" id="MF_00523">
    <property type="entry name" value="LpxD"/>
    <property type="match status" value="1"/>
</dbReference>
<dbReference type="InterPro" id="IPR001451">
    <property type="entry name" value="Hexapep"/>
</dbReference>
<dbReference type="InterPro" id="IPR018357">
    <property type="entry name" value="Hexapep_transf_CS"/>
</dbReference>
<dbReference type="InterPro" id="IPR007691">
    <property type="entry name" value="LpxD"/>
</dbReference>
<dbReference type="InterPro" id="IPR011004">
    <property type="entry name" value="Trimer_LpxA-like_sf"/>
</dbReference>
<dbReference type="InterPro" id="IPR020573">
    <property type="entry name" value="UDP_GlcNAc_AcTrfase_non-rep"/>
</dbReference>
<dbReference type="NCBIfam" id="TIGR01853">
    <property type="entry name" value="lipid_A_lpxD"/>
    <property type="match status" value="1"/>
</dbReference>
<dbReference type="NCBIfam" id="NF002060">
    <property type="entry name" value="PRK00892.1"/>
    <property type="match status" value="1"/>
</dbReference>
<dbReference type="PANTHER" id="PTHR43378">
    <property type="entry name" value="UDP-3-O-ACYLGLUCOSAMINE N-ACYLTRANSFERASE"/>
    <property type="match status" value="1"/>
</dbReference>
<dbReference type="PANTHER" id="PTHR43378:SF2">
    <property type="entry name" value="UDP-3-O-ACYLGLUCOSAMINE N-ACYLTRANSFERASE 1, MITOCHONDRIAL-RELATED"/>
    <property type="match status" value="1"/>
</dbReference>
<dbReference type="Pfam" id="PF00132">
    <property type="entry name" value="Hexapep"/>
    <property type="match status" value="2"/>
</dbReference>
<dbReference type="Pfam" id="PF04613">
    <property type="entry name" value="LpxD"/>
    <property type="match status" value="1"/>
</dbReference>
<dbReference type="SUPFAM" id="SSF51161">
    <property type="entry name" value="Trimeric LpxA-like enzymes"/>
    <property type="match status" value="1"/>
</dbReference>
<dbReference type="PROSITE" id="PS00101">
    <property type="entry name" value="HEXAPEP_TRANSFERASES"/>
    <property type="match status" value="2"/>
</dbReference>
<protein>
    <recommendedName>
        <fullName evidence="1">UDP-3-O-acylglucosamine N-acyltransferase</fullName>
        <ecNumber evidence="1">2.3.1.191</ecNumber>
    </recommendedName>
</protein>
<organism>
    <name type="scientific">Rickettsia prowazekii (strain Madrid E)</name>
    <dbReference type="NCBI Taxonomy" id="272947"/>
    <lineage>
        <taxon>Bacteria</taxon>
        <taxon>Pseudomonadati</taxon>
        <taxon>Pseudomonadota</taxon>
        <taxon>Alphaproteobacteria</taxon>
        <taxon>Rickettsiales</taxon>
        <taxon>Rickettsiaceae</taxon>
        <taxon>Rickettsieae</taxon>
        <taxon>Rickettsia</taxon>
        <taxon>typhus group</taxon>
    </lineage>
</organism>
<name>LPXD_RICPR</name>
<proteinExistence type="inferred from homology"/>
<evidence type="ECO:0000255" key="1">
    <source>
        <dbReference type="HAMAP-Rule" id="MF_00523"/>
    </source>
</evidence>
<feature type="chain" id="PRO_0000059698" description="UDP-3-O-acylglucosamine N-acyltransferase">
    <location>
        <begin position="1"/>
        <end position="346"/>
    </location>
</feature>
<feature type="active site" description="Proton acceptor" evidence="1">
    <location>
        <position position="253"/>
    </location>
</feature>
<keyword id="KW-0012">Acyltransferase</keyword>
<keyword id="KW-0441">Lipid A biosynthesis</keyword>
<keyword id="KW-0444">Lipid biosynthesis</keyword>
<keyword id="KW-0443">Lipid metabolism</keyword>
<keyword id="KW-1185">Reference proteome</keyword>
<keyword id="KW-0677">Repeat</keyword>
<keyword id="KW-0808">Transferase</keyword>
<gene>
    <name evidence="1" type="primary">lpxD</name>
    <name type="ordered locus">RP009</name>
</gene>